<comment type="function">
    <text evidence="1 2">Catalyzes the methylation of sarcosine and dimethylglycine to dimethylglycine and betaine, respectively, with S-adenosylmethionine (AdoMet) acting as the methyl donor (PubMed:10896953, PubMed:11319079). It has strict specificity for sarcosine and dimethylglycine as the methyl group acceptors (PubMed:11319079).</text>
</comment>
<comment type="catalytic activity">
    <reaction evidence="1 2">
        <text>sarcosine + 2 S-adenosyl-L-methionine = glycine betaine + 2 S-adenosyl-L-homocysteine + 2 H(+)</text>
        <dbReference type="Rhea" id="RHEA:32467"/>
        <dbReference type="ChEBI" id="CHEBI:15378"/>
        <dbReference type="ChEBI" id="CHEBI:17750"/>
        <dbReference type="ChEBI" id="CHEBI:57433"/>
        <dbReference type="ChEBI" id="CHEBI:57856"/>
        <dbReference type="ChEBI" id="CHEBI:59789"/>
        <dbReference type="EC" id="2.1.1.157"/>
    </reaction>
    <physiologicalReaction direction="left-to-right" evidence="1 2">
        <dbReference type="Rhea" id="RHEA:32468"/>
    </physiologicalReaction>
</comment>
<comment type="catalytic activity">
    <reaction evidence="1 2">
        <text>sarcosine + S-adenosyl-L-methionine = N,N-dimethylglycine + S-adenosyl-L-homocysteine + H(+)</text>
        <dbReference type="Rhea" id="RHEA:15453"/>
        <dbReference type="ChEBI" id="CHEBI:15378"/>
        <dbReference type="ChEBI" id="CHEBI:57433"/>
        <dbReference type="ChEBI" id="CHEBI:57856"/>
        <dbReference type="ChEBI" id="CHEBI:58251"/>
        <dbReference type="ChEBI" id="CHEBI:59789"/>
    </reaction>
    <physiologicalReaction direction="left-to-right" evidence="1 2">
        <dbReference type="Rhea" id="RHEA:15454"/>
    </physiologicalReaction>
</comment>
<comment type="catalytic activity">
    <reaction evidence="1 2">
        <text>N,N-dimethylglycine + S-adenosyl-L-methionine = glycine betaine + S-adenosyl-L-homocysteine + H(+)</text>
        <dbReference type="Rhea" id="RHEA:10072"/>
        <dbReference type="ChEBI" id="CHEBI:15378"/>
        <dbReference type="ChEBI" id="CHEBI:17750"/>
        <dbReference type="ChEBI" id="CHEBI:57856"/>
        <dbReference type="ChEBI" id="CHEBI:58251"/>
        <dbReference type="ChEBI" id="CHEBI:59789"/>
    </reaction>
    <physiologicalReaction direction="left-to-right" evidence="1 2">
        <dbReference type="Rhea" id="RHEA:10073"/>
    </physiologicalReaction>
</comment>
<comment type="activity regulation">
    <text evidence="2">p-chloromercuribenzoate acid inhibits 23% of the SDMT activities on sarcosine and dimethylglycine, and S-adenosylhomocysteine (AdoHcy) inhibits completely GSMT activities.</text>
</comment>
<comment type="biophysicochemical properties">
    <kinetics>
        <KM evidence="2">0.16 mM for AdoMet (with dimethylglycine at pH 7.4 and at 37 degrees Celsius)</KM>
        <KM evidence="2">0.21 mM for AdoMet (with sarcosine at pH 7.4 and at 37 degrees Celsius)</KM>
        <KM evidence="2">4.9 mM for dimethylglycine (at pH 7.4 and at 37 degrees Celsius)</KM>
        <KM evidence="2">6.1 mM for sarcosine (at pH 7.4 and at 37 degrees Celsius)</KM>
        <Vmax evidence="2">1.1 umol/min/mg enzyme with AdoMet as substrate (with sarcosine at pH 7.4 and at 37 degrees Celsius)</Vmax>
        <Vmax evidence="2">1.3 umol/min/mg enzyme with sarcosine as substrate (at pH 7.4 and at 37 degrees)</Vmax>
        <Vmax evidence="2">6.1 umol/min/mg enzyme with AdoMet as substrate (with dimethylglycine at pH 7.4 and at 37 degrees Celsius)</Vmax>
        <Vmax evidence="2">7.4 umol/min/mg enzyme with dimethylglycine as substrate (at pH 7.4 and at 37 degrees Celsius)</Vmax>
    </kinetics>
    <phDependence>
        <text evidence="2">Optimum pH is around 8 and 7.6 for sarcosine and dimethylglycine, respectively. The pH optimum appears to depend on the buffer used.</text>
    </phDependence>
</comment>
<comment type="pathway">
    <text evidence="6">Amine and polyamine biosynthesis; betaine biosynthesis via glycine pathway; betaine from glycine: step 2/3.</text>
</comment>
<comment type="pathway">
    <text evidence="6">Amine and polyamine biosynthesis; betaine biosynthesis via glycine pathway; betaine from glycine: step 3/3.</text>
</comment>
<comment type="subunit">
    <text evidence="2">Monomer.</text>
</comment>
<comment type="similarity">
    <text evidence="5">Belongs to the methyltransferase superfamily.</text>
</comment>
<accession>Q9KJ21</accession>
<organism>
    <name type="scientific">Halorhodospira halochloris</name>
    <name type="common">Ectothiorhodospira halochloris</name>
    <dbReference type="NCBI Taxonomy" id="1052"/>
    <lineage>
        <taxon>Bacteria</taxon>
        <taxon>Pseudomonadati</taxon>
        <taxon>Pseudomonadota</taxon>
        <taxon>Gammaproteobacteria</taxon>
        <taxon>Chromatiales</taxon>
        <taxon>Ectothiorhodospiraceae</taxon>
        <taxon>Halorhodospira</taxon>
    </lineage>
</organism>
<evidence type="ECO:0000269" key="1">
    <source>
    </source>
</evidence>
<evidence type="ECO:0000269" key="2">
    <source>
    </source>
</evidence>
<evidence type="ECO:0000303" key="3">
    <source>
    </source>
</evidence>
<evidence type="ECO:0000303" key="4">
    <source>
    </source>
</evidence>
<evidence type="ECO:0000305" key="5"/>
<evidence type="ECO:0000305" key="6">
    <source>
    </source>
</evidence>
<protein>
    <recommendedName>
        <fullName evidence="4">Sarcosine/dimethylglycine N-methyltransferase</fullName>
        <shortName evidence="3 4">SDMT</shortName>
        <ecNumber evidence="1 2">2.1.1.157</ecNumber>
    </recommendedName>
</protein>
<proteinExistence type="evidence at protein level"/>
<feature type="chain" id="PRO_0000413614" description="Sarcosine/dimethylglycine N-methyltransferase">
    <location>
        <begin position="1"/>
        <end position="279"/>
    </location>
</feature>
<dbReference type="EC" id="2.1.1.157" evidence="1 2"/>
<dbReference type="EMBL" id="AF216282">
    <property type="protein sequence ID" value="AAF87203.1"/>
    <property type="molecule type" value="Genomic_DNA"/>
</dbReference>
<dbReference type="RefSeq" id="WP_096409577.1">
    <property type="nucleotide sequence ID" value="NZ_AP017372.2"/>
</dbReference>
<dbReference type="SMR" id="Q9KJ21"/>
<dbReference type="KEGG" id="ag:AAF87203"/>
<dbReference type="OrthoDB" id="529208at2"/>
<dbReference type="BioCyc" id="MetaCyc:MONOMER-8543"/>
<dbReference type="BRENDA" id="2.1.1.157">
    <property type="organism ID" value="2037"/>
</dbReference>
<dbReference type="UniPathway" id="UPA00530">
    <property type="reaction ID" value="UER00382"/>
</dbReference>
<dbReference type="UniPathway" id="UPA00530">
    <property type="reaction ID" value="UER00383"/>
</dbReference>
<dbReference type="GO" id="GO:0052729">
    <property type="term" value="F:dimethylglycine N-methyltransferase activity"/>
    <property type="evidence" value="ECO:0000314"/>
    <property type="project" value="UniProtKB"/>
</dbReference>
<dbReference type="GO" id="GO:0052730">
    <property type="term" value="F:sarcosine N-methyltransferase activity"/>
    <property type="evidence" value="ECO:0000314"/>
    <property type="project" value="UniProtKB"/>
</dbReference>
<dbReference type="GO" id="GO:0019286">
    <property type="term" value="P:glycine betaine biosynthetic process from glycine"/>
    <property type="evidence" value="ECO:0000314"/>
    <property type="project" value="UniProtKB"/>
</dbReference>
<dbReference type="GO" id="GO:0032259">
    <property type="term" value="P:methylation"/>
    <property type="evidence" value="ECO:0000314"/>
    <property type="project" value="UniProtKB"/>
</dbReference>
<dbReference type="CDD" id="cd02440">
    <property type="entry name" value="AdoMet_MTases"/>
    <property type="match status" value="1"/>
</dbReference>
<dbReference type="FunFam" id="3.40.50.150:FF:000461">
    <property type="entry name" value="Sarcosine/dimethylglycine N-methyltransferase"/>
    <property type="match status" value="1"/>
</dbReference>
<dbReference type="Gene3D" id="3.40.50.150">
    <property type="entry name" value="Vaccinia Virus protein VP39"/>
    <property type="match status" value="1"/>
</dbReference>
<dbReference type="InterPro" id="IPR050447">
    <property type="entry name" value="Erg6_SMT_methyltransf"/>
</dbReference>
<dbReference type="InterPro" id="IPR013216">
    <property type="entry name" value="Methyltransf_11"/>
</dbReference>
<dbReference type="InterPro" id="IPR029063">
    <property type="entry name" value="SAM-dependent_MTases_sf"/>
</dbReference>
<dbReference type="InterPro" id="IPR053704">
    <property type="entry name" value="SDMT"/>
</dbReference>
<dbReference type="NCBIfam" id="NF041675">
    <property type="entry name" value="sarc_dimgly_tmase"/>
    <property type="match status" value="1"/>
</dbReference>
<dbReference type="PANTHER" id="PTHR44068:SF11">
    <property type="entry name" value="GERANYL DIPHOSPHATE 2-C-METHYLTRANSFERASE"/>
    <property type="match status" value="1"/>
</dbReference>
<dbReference type="PANTHER" id="PTHR44068">
    <property type="entry name" value="ZGC:194242"/>
    <property type="match status" value="1"/>
</dbReference>
<dbReference type="Pfam" id="PF08241">
    <property type="entry name" value="Methyltransf_11"/>
    <property type="match status" value="1"/>
</dbReference>
<dbReference type="SUPFAM" id="SSF53335">
    <property type="entry name" value="S-adenosyl-L-methionine-dependent methyltransferases"/>
    <property type="match status" value="1"/>
</dbReference>
<sequence length="279" mass="32228">MATRYDDQAIETARQYYNSEDADNFYAIIWGGEDIHIGLYNDDEEPIADASRRTVERMSSLSRQLGPDSYVLDMGAGYGGSARYLAHKYGCKVAALNLSERENERDRQMNKEQGVDHLIEVVDAAFEDVPYDDGVFDLVWSQDSFLHSPDRERVLREASRVLRSGGEFIFTDPMQADDCPEGVIQPILDRIHLETMGTPNFYRQTLRDLGFEEITFEDHTHQLPRHYGRVRRELDRREGELQGHVSAEYIERMKNGLDHWVNGGNKGYLTWGIFYFRKG</sequence>
<keyword id="KW-0489">Methyltransferase</keyword>
<keyword id="KW-0949">S-adenosyl-L-methionine</keyword>
<keyword id="KW-0808">Transferase</keyword>
<name>SDMT_HALHR</name>
<reference key="1">
    <citation type="journal article" date="2000" name="J. Biol. Chem.">
        <title>Extreme halophiles synthesize betaine from glycine by methylation.</title>
        <authorList>
            <person name="Nyyssola A."/>
            <person name="Kerovuo J."/>
            <person name="Kaukinen P."/>
            <person name="von Weymarn N."/>
            <person name="Reinikainen T."/>
        </authorList>
    </citation>
    <scope>NUCLEOTIDE SEQUENCE [GENOMIC DNA]</scope>
    <scope>FUNCTION</scope>
    <scope>CATALYTIC ACTIVITY</scope>
    <source>
        <strain>ATCC 35916</strain>
    </source>
</reference>
<reference key="2">
    <citation type="journal article" date="2001" name="Appl. Environ. Microbiol.">
        <title>Characterization of glycine sarcosine N-methyltransferase and sarcosine dimethylglycine N-methyltransferase.</title>
        <authorList>
            <person name="Nyyssola A."/>
            <person name="Reinikainen T."/>
            <person name="Leisola M."/>
        </authorList>
    </citation>
    <scope>FUNCTION AS A METHYLTRANSFERASE AND IN BETAINE BIOSYNTHESIS</scope>
    <scope>CATALYTIC ACTIVITY</scope>
    <scope>SUBSTRATE SPECIFICITY</scope>
    <scope>ACTIVITY REGULATION</scope>
    <scope>BIOPHYSICOCHEMICAL PROPERTIES</scope>
    <scope>SUBUNIT</scope>
</reference>